<keyword id="KW-0903">Direct protein sequencing</keyword>
<keyword id="KW-0430">Lectin</keyword>
<reference evidence="5" key="1">
    <citation type="submission" date="2022-01" db="UniProtKB">
        <title>Amino acid sequence of ALL, a galectin from marine sponge Aplysina lactuca.</title>
        <authorList>
            <person name="de Assis Duarte J."/>
            <person name="Farias Cerneiro R."/>
            <person name="Holanda Sampaio A."/>
            <person name="Shiniti Nagano C."/>
        </authorList>
    </citation>
    <scope>PROTEIN SEQUENCE</scope>
    <scope>SUBUNIT</scope>
    <scope>MASS SPECTROMETRY</scope>
</reference>
<sequence>DHIDLEFDVGQCIQASYTAPTAGRTSVNIVASDGTVVLHVDYRKHSGGKPSTGKPWNQILIINSKLGGSWGTEEKVHDVETTIVYNDYTGCKQDADFSIELNQKDIATYAYRTPVNTVSRVEFGNSGNDAVLRKLCVVYPAPSK</sequence>
<evidence type="ECO:0000250" key="1">
    <source>
        <dbReference type="UniProtKB" id="P09382"/>
    </source>
</evidence>
<evidence type="ECO:0000255" key="2">
    <source>
        <dbReference type="PROSITE-ProRule" id="PRU00639"/>
    </source>
</evidence>
<evidence type="ECO:0000269" key="3">
    <source ref="1"/>
</evidence>
<evidence type="ECO:0000303" key="4">
    <source ref="1"/>
</evidence>
<evidence type="ECO:0000305" key="5"/>
<comment type="function">
    <text evidence="1">Lectin that binds beta-galactoside and a wide array of complex carbohydrates.</text>
</comment>
<comment type="subunit">
    <text evidence="3">Tetramer.</text>
</comment>
<comment type="mass spectrometry"/>
<proteinExistence type="evidence at protein level"/>
<organism>
    <name type="scientific">Aplysina lactuca</name>
    <name type="common">Marine sponge</name>
    <dbReference type="NCBI Taxonomy" id="2911866"/>
    <lineage>
        <taxon>Eukaryota</taxon>
        <taxon>Metazoa</taxon>
        <taxon>Porifera</taxon>
        <taxon>Demospongiae</taxon>
        <taxon>Verongimorpha</taxon>
        <taxon>Verongiida</taxon>
        <taxon>Aplysinidae</taxon>
        <taxon>Aplysina</taxon>
    </lineage>
</organism>
<name>LEG1_APLLA</name>
<feature type="chain" id="PRO_0000457093" description="Galectin a">
    <location>
        <begin position="1"/>
        <end position="144"/>
    </location>
</feature>
<feature type="domain" description="Galectin" evidence="2">
    <location>
        <begin position="1"/>
        <end position="138"/>
    </location>
</feature>
<dbReference type="SMR" id="C0HM19"/>
<dbReference type="GO" id="GO:0030246">
    <property type="term" value="F:carbohydrate binding"/>
    <property type="evidence" value="ECO:0007669"/>
    <property type="project" value="UniProtKB-KW"/>
</dbReference>
<dbReference type="Gene3D" id="2.60.120.200">
    <property type="match status" value="1"/>
</dbReference>
<dbReference type="InterPro" id="IPR013320">
    <property type="entry name" value="ConA-like_dom_sf"/>
</dbReference>
<dbReference type="InterPro" id="IPR001079">
    <property type="entry name" value="Galectin_CRD"/>
</dbReference>
<dbReference type="Pfam" id="PF00337">
    <property type="entry name" value="Gal-bind_lectin"/>
    <property type="match status" value="1"/>
</dbReference>
<dbReference type="SMART" id="SM00276">
    <property type="entry name" value="GLECT"/>
    <property type="match status" value="1"/>
</dbReference>
<dbReference type="SUPFAM" id="SSF49899">
    <property type="entry name" value="Concanavalin A-like lectins/glucanases"/>
    <property type="match status" value="1"/>
</dbReference>
<dbReference type="PROSITE" id="PS51304">
    <property type="entry name" value="GALECTIN"/>
    <property type="match status" value="1"/>
</dbReference>
<accession>C0HM19</accession>
<protein>
    <recommendedName>
        <fullName evidence="5">Galectin a</fullName>
        <shortName evidence="5">Gal-a</shortName>
    </recommendedName>
    <alternativeName>
        <fullName evidence="4">Aplysina lactuca lectin a</fullName>
        <shortName evidence="4">ALL-a</shortName>
    </alternativeName>
    <alternativeName>
        <fullName evidence="5">Beta-galactoside-binding lectin a</fullName>
    </alternativeName>
</protein>